<comment type="function">
    <text evidence="2">Binds the lower part of the 30S subunit head. Binds mRNA in the 70S ribosome, positioning it for translation.</text>
</comment>
<comment type="subunit">
    <text evidence="2">Part of the 30S ribosomal subunit. Forms a tight complex with proteins S10 and S14.</text>
</comment>
<comment type="similarity">
    <text evidence="2">Belongs to the universal ribosomal protein uS3 family.</text>
</comment>
<keyword id="KW-0687">Ribonucleoprotein</keyword>
<keyword id="KW-0689">Ribosomal protein</keyword>
<keyword id="KW-0694">RNA-binding</keyword>
<keyword id="KW-0699">rRNA-binding</keyword>
<feature type="initiator methionine" description="Removed" evidence="1">
    <location>
        <position position="1"/>
    </location>
</feature>
<feature type="chain" id="PRO_0000130218" description="Small ribosomal subunit protein uS3">
    <location>
        <begin position="2"/>
        <end position="244"/>
    </location>
</feature>
<feature type="domain" description="KH type-2" evidence="2">
    <location>
        <begin position="39"/>
        <end position="110"/>
    </location>
</feature>
<feature type="region of interest" description="Disordered" evidence="3">
    <location>
        <begin position="215"/>
        <end position="244"/>
    </location>
</feature>
<feature type="compositionally biased region" description="Basic residues" evidence="3">
    <location>
        <begin position="225"/>
        <end position="234"/>
    </location>
</feature>
<feature type="compositionally biased region" description="Basic and acidic residues" evidence="3">
    <location>
        <begin position="235"/>
        <end position="244"/>
    </location>
</feature>
<gene>
    <name evidence="2" type="primary">rpsC</name>
    <name evidence="2" type="synonym">rps3</name>
    <name type="ordered locus">syc1871_d</name>
</gene>
<organism>
    <name type="scientific">Synechococcus sp. (strain ATCC 27144 / PCC 6301 / SAUG 1402/1)</name>
    <name type="common">Anacystis nidulans</name>
    <dbReference type="NCBI Taxonomy" id="269084"/>
    <lineage>
        <taxon>Bacteria</taxon>
        <taxon>Bacillati</taxon>
        <taxon>Cyanobacteriota</taxon>
        <taxon>Cyanophyceae</taxon>
        <taxon>Synechococcales</taxon>
        <taxon>Synechococcaceae</taxon>
        <taxon>Synechococcus</taxon>
    </lineage>
</organism>
<name>RS3_SYNP6</name>
<reference key="1">
    <citation type="journal article" date="1997" name="Gene">
        <title>Organization of a large gene cluster encoding ribosomal proteins in the cyanobacterium Synechococcus sp. strain PCC 6301: comparison of gene clusters among cyanobacteria, eubacteria and chloroplast genomes.</title>
        <authorList>
            <person name="Sugita M."/>
            <person name="Sugishita H."/>
            <person name="Fujishiro T."/>
            <person name="Tsuboi M."/>
            <person name="Sugita C."/>
            <person name="Endo T."/>
            <person name="Sugiura M."/>
        </authorList>
    </citation>
    <scope>NUCLEOTIDE SEQUENCE [GENOMIC DNA]</scope>
</reference>
<reference key="2">
    <citation type="journal article" date="2007" name="Photosyn. Res.">
        <title>Complete nucleotide sequence of the freshwater unicellular cyanobacterium Synechococcus elongatus PCC 6301 chromosome: gene content and organization.</title>
        <authorList>
            <person name="Sugita C."/>
            <person name="Ogata K."/>
            <person name="Shikata M."/>
            <person name="Jikuya H."/>
            <person name="Takano J."/>
            <person name="Furumichi M."/>
            <person name="Kanehisa M."/>
            <person name="Omata T."/>
            <person name="Sugiura M."/>
            <person name="Sugita M."/>
        </authorList>
    </citation>
    <scope>NUCLEOTIDE SEQUENCE [LARGE SCALE GENOMIC DNA]</scope>
    <source>
        <strain>ATCC 27144 / PCC 6301 / SAUG 1402/1</strain>
    </source>
</reference>
<accession>O24695</accession>
<protein>
    <recommendedName>
        <fullName evidence="2">Small ribosomal subunit protein uS3</fullName>
    </recommendedName>
    <alternativeName>
        <fullName evidence="4">30S ribosomal protein S3</fullName>
    </alternativeName>
</protein>
<sequence length="244" mass="27718">MGQKINPVGFRLGVTQEHRSRWFADPNRYPQLLQEDKKIRDYVRKNLSNAGIADIRVERKADQVELEIRTARPGVVVGRGGAGIDTLREGLQALLKDSSRQIRINVIEVERVDADAALLGEYIAQQLERRVAFRRCVRQAIQRAQRAGVQGIKIQVAGRLNGAEIARTEWTREGRVPLHTLRADIDYAYTTATTTYGILGIKVWVFRGEIIPGQEDAAPSNVGQPRRRNQQRRRQQFEDRSNEG</sequence>
<evidence type="ECO:0000250" key="1"/>
<evidence type="ECO:0000255" key="2">
    <source>
        <dbReference type="HAMAP-Rule" id="MF_01309"/>
    </source>
</evidence>
<evidence type="ECO:0000256" key="3">
    <source>
        <dbReference type="SAM" id="MobiDB-lite"/>
    </source>
</evidence>
<evidence type="ECO:0000305" key="4"/>
<proteinExistence type="inferred from homology"/>
<dbReference type="EMBL" id="AB000111">
    <property type="protein sequence ID" value="BAA22455.1"/>
    <property type="molecule type" value="Genomic_DNA"/>
</dbReference>
<dbReference type="EMBL" id="AP008231">
    <property type="protein sequence ID" value="BAD80061.1"/>
    <property type="molecule type" value="Genomic_DNA"/>
</dbReference>
<dbReference type="RefSeq" id="WP_011244181.1">
    <property type="nucleotide sequence ID" value="NZ_CP085785.1"/>
</dbReference>
<dbReference type="SMR" id="O24695"/>
<dbReference type="GeneID" id="72431109"/>
<dbReference type="KEGG" id="syc:syc1871_d"/>
<dbReference type="eggNOG" id="COG0092">
    <property type="taxonomic scope" value="Bacteria"/>
</dbReference>
<dbReference type="Proteomes" id="UP000001175">
    <property type="component" value="Chromosome"/>
</dbReference>
<dbReference type="GO" id="GO:0022627">
    <property type="term" value="C:cytosolic small ribosomal subunit"/>
    <property type="evidence" value="ECO:0007669"/>
    <property type="project" value="TreeGrafter"/>
</dbReference>
<dbReference type="GO" id="GO:0003729">
    <property type="term" value="F:mRNA binding"/>
    <property type="evidence" value="ECO:0007669"/>
    <property type="project" value="UniProtKB-UniRule"/>
</dbReference>
<dbReference type="GO" id="GO:0019843">
    <property type="term" value="F:rRNA binding"/>
    <property type="evidence" value="ECO:0007669"/>
    <property type="project" value="UniProtKB-UniRule"/>
</dbReference>
<dbReference type="GO" id="GO:0003735">
    <property type="term" value="F:structural constituent of ribosome"/>
    <property type="evidence" value="ECO:0007669"/>
    <property type="project" value="InterPro"/>
</dbReference>
<dbReference type="GO" id="GO:0006412">
    <property type="term" value="P:translation"/>
    <property type="evidence" value="ECO:0007669"/>
    <property type="project" value="UniProtKB-UniRule"/>
</dbReference>
<dbReference type="CDD" id="cd02412">
    <property type="entry name" value="KH-II_30S_S3"/>
    <property type="match status" value="1"/>
</dbReference>
<dbReference type="FunFam" id="3.30.300.20:FF:000001">
    <property type="entry name" value="30S ribosomal protein S3"/>
    <property type="match status" value="1"/>
</dbReference>
<dbReference type="Gene3D" id="3.30.300.20">
    <property type="match status" value="1"/>
</dbReference>
<dbReference type="Gene3D" id="3.30.1140.32">
    <property type="entry name" value="Ribosomal protein S3, C-terminal domain"/>
    <property type="match status" value="1"/>
</dbReference>
<dbReference type="HAMAP" id="MF_01309_B">
    <property type="entry name" value="Ribosomal_uS3_B"/>
    <property type="match status" value="1"/>
</dbReference>
<dbReference type="InterPro" id="IPR004087">
    <property type="entry name" value="KH_dom"/>
</dbReference>
<dbReference type="InterPro" id="IPR015946">
    <property type="entry name" value="KH_dom-like_a/b"/>
</dbReference>
<dbReference type="InterPro" id="IPR004044">
    <property type="entry name" value="KH_dom_type_2"/>
</dbReference>
<dbReference type="InterPro" id="IPR009019">
    <property type="entry name" value="KH_sf_prok-type"/>
</dbReference>
<dbReference type="InterPro" id="IPR036419">
    <property type="entry name" value="Ribosomal_S3_C_sf"/>
</dbReference>
<dbReference type="InterPro" id="IPR005704">
    <property type="entry name" value="Ribosomal_uS3_bac-typ"/>
</dbReference>
<dbReference type="InterPro" id="IPR001351">
    <property type="entry name" value="Ribosomal_uS3_C"/>
</dbReference>
<dbReference type="InterPro" id="IPR018280">
    <property type="entry name" value="Ribosomal_uS3_CS"/>
</dbReference>
<dbReference type="NCBIfam" id="TIGR01009">
    <property type="entry name" value="rpsC_bact"/>
    <property type="match status" value="1"/>
</dbReference>
<dbReference type="PANTHER" id="PTHR11760">
    <property type="entry name" value="30S/40S RIBOSOMAL PROTEIN S3"/>
    <property type="match status" value="1"/>
</dbReference>
<dbReference type="PANTHER" id="PTHR11760:SF19">
    <property type="entry name" value="SMALL RIBOSOMAL SUBUNIT PROTEIN US3C"/>
    <property type="match status" value="1"/>
</dbReference>
<dbReference type="Pfam" id="PF07650">
    <property type="entry name" value="KH_2"/>
    <property type="match status" value="1"/>
</dbReference>
<dbReference type="Pfam" id="PF00189">
    <property type="entry name" value="Ribosomal_S3_C"/>
    <property type="match status" value="1"/>
</dbReference>
<dbReference type="SMART" id="SM00322">
    <property type="entry name" value="KH"/>
    <property type="match status" value="1"/>
</dbReference>
<dbReference type="SUPFAM" id="SSF54814">
    <property type="entry name" value="Prokaryotic type KH domain (KH-domain type II)"/>
    <property type="match status" value="1"/>
</dbReference>
<dbReference type="SUPFAM" id="SSF54821">
    <property type="entry name" value="Ribosomal protein S3 C-terminal domain"/>
    <property type="match status" value="1"/>
</dbReference>
<dbReference type="PROSITE" id="PS50823">
    <property type="entry name" value="KH_TYPE_2"/>
    <property type="match status" value="1"/>
</dbReference>
<dbReference type="PROSITE" id="PS00548">
    <property type="entry name" value="RIBOSOMAL_S3"/>
    <property type="match status" value="1"/>
</dbReference>